<feature type="transit peptide" description="Mitochondrion">
    <location>
        <begin position="1"/>
        <end status="unknown"/>
    </location>
</feature>
<feature type="chain" id="PRO_0000002552" description="ATPase inhibitor mai-2, mitochondrial">
    <location>
        <begin status="unknown"/>
        <end position="109"/>
    </location>
</feature>
<feature type="region of interest" description="Disordered" evidence="3">
    <location>
        <begin position="18"/>
        <end position="39"/>
    </location>
</feature>
<feature type="region of interest" description="Disordered" evidence="3">
    <location>
        <begin position="73"/>
        <end position="109"/>
    </location>
</feature>
<feature type="coiled-coil region" evidence="2">
    <location>
        <begin position="55"/>
        <end position="109"/>
    </location>
</feature>
<feature type="compositionally biased region" description="Gly residues" evidence="3">
    <location>
        <begin position="21"/>
        <end position="35"/>
    </location>
</feature>
<organism>
    <name type="scientific">Caenorhabditis elegans</name>
    <dbReference type="NCBI Taxonomy" id="6239"/>
    <lineage>
        <taxon>Eukaryota</taxon>
        <taxon>Metazoa</taxon>
        <taxon>Ecdysozoa</taxon>
        <taxon>Nematoda</taxon>
        <taxon>Chromadorea</taxon>
        <taxon>Rhabditida</taxon>
        <taxon>Rhabditina</taxon>
        <taxon>Rhabditomorpha</taxon>
        <taxon>Rhabditoidea</taxon>
        <taxon>Rhabditidae</taxon>
        <taxon>Peloderinae</taxon>
        <taxon>Caenorhabditis</taxon>
    </lineage>
</organism>
<proteinExistence type="inferred from homology"/>
<dbReference type="EMBL" id="FO080229">
    <property type="protein sequence ID" value="CCD62188.1"/>
    <property type="molecule type" value="Genomic_DNA"/>
</dbReference>
<dbReference type="EMBL" id="AF326939">
    <property type="protein sequence ID" value="AAG49389.1"/>
    <property type="molecule type" value="mRNA"/>
</dbReference>
<dbReference type="PIR" id="T32588">
    <property type="entry name" value="T32588"/>
</dbReference>
<dbReference type="RefSeq" id="NP_500336.1">
    <property type="nucleotide sequence ID" value="NM_067935.9"/>
</dbReference>
<dbReference type="SMR" id="O44441"/>
<dbReference type="BioGRID" id="42246">
    <property type="interactions" value="15"/>
</dbReference>
<dbReference type="FunCoup" id="O44441">
    <property type="interactions" value="1196"/>
</dbReference>
<dbReference type="STRING" id="6239.B0546.1.1"/>
<dbReference type="PaxDb" id="6239-B0546.1.2"/>
<dbReference type="PeptideAtlas" id="O44441"/>
<dbReference type="EnsemblMetazoa" id="B0546.1.1">
    <property type="protein sequence ID" value="B0546.1.1"/>
    <property type="gene ID" value="WBGene00015248"/>
</dbReference>
<dbReference type="GeneID" id="177106"/>
<dbReference type="KEGG" id="cel:CELE_B0546.1"/>
<dbReference type="AGR" id="WB:WBGene00015248"/>
<dbReference type="CTD" id="177106"/>
<dbReference type="WormBase" id="B0546.1">
    <property type="protein sequence ID" value="CE16792"/>
    <property type="gene ID" value="WBGene00015248"/>
    <property type="gene designation" value="mai-2"/>
</dbReference>
<dbReference type="eggNOG" id="ENOG502S8MH">
    <property type="taxonomic scope" value="Eukaryota"/>
</dbReference>
<dbReference type="GeneTree" id="ENSGT00850000133005"/>
<dbReference type="HOGENOM" id="CLU_147479_1_1_1"/>
<dbReference type="InParanoid" id="O44441"/>
<dbReference type="OMA" id="QEVDHHK"/>
<dbReference type="OrthoDB" id="10045676at2759"/>
<dbReference type="PhylomeDB" id="O44441"/>
<dbReference type="PRO" id="PR:O44441"/>
<dbReference type="Proteomes" id="UP000001940">
    <property type="component" value="Chromosome IV"/>
</dbReference>
<dbReference type="Bgee" id="WBGene00015248">
    <property type="expression patterns" value="Expressed in adult organism and 4 other cell types or tissues"/>
</dbReference>
<dbReference type="GO" id="GO:0005739">
    <property type="term" value="C:mitochondrion"/>
    <property type="evidence" value="ECO:0000314"/>
    <property type="project" value="WormBase"/>
</dbReference>
<dbReference type="GO" id="GO:0042030">
    <property type="term" value="F:ATPase inhibitor activity"/>
    <property type="evidence" value="ECO:0000314"/>
    <property type="project" value="UniProtKB"/>
</dbReference>
<dbReference type="GO" id="GO:0045980">
    <property type="term" value="P:negative regulation of nucleotide metabolic process"/>
    <property type="evidence" value="ECO:0000305"/>
    <property type="project" value="UniProtKB"/>
</dbReference>
<dbReference type="FunFam" id="1.20.5.500:FF:000007">
    <property type="entry name" value="ATPase inhibitor, putative"/>
    <property type="match status" value="1"/>
</dbReference>
<dbReference type="Gene3D" id="1.20.5.500">
    <property type="entry name" value="Single helix bin"/>
    <property type="match status" value="1"/>
</dbReference>
<dbReference type="InterPro" id="IPR007648">
    <property type="entry name" value="ATPase_inhibitor_mt"/>
</dbReference>
<dbReference type="PANTHER" id="PTHR48417">
    <property type="entry name" value="ATP SYNTHASE F1 SUBUNIT EPSILON"/>
    <property type="match status" value="1"/>
</dbReference>
<dbReference type="PANTHER" id="PTHR48417:SF1">
    <property type="entry name" value="ATP SYNTHASE F1 SUBUNIT EPSILON"/>
    <property type="match status" value="1"/>
</dbReference>
<dbReference type="Pfam" id="PF04568">
    <property type="entry name" value="IATP"/>
    <property type="match status" value="1"/>
</dbReference>
<dbReference type="SUPFAM" id="SSF64602">
    <property type="entry name" value="F1 ATPase inhibitor, IF1, C-terminal domain"/>
    <property type="match status" value="1"/>
</dbReference>
<keyword id="KW-0175">Coiled coil</keyword>
<keyword id="KW-0496">Mitochondrion</keyword>
<keyword id="KW-1185">Reference proteome</keyword>
<keyword id="KW-0809">Transit peptide</keyword>
<evidence type="ECO:0000250" key="1">
    <source>
        <dbReference type="UniProtKB" id="Q9UII2"/>
    </source>
</evidence>
<evidence type="ECO:0000255" key="2"/>
<evidence type="ECO:0000256" key="3">
    <source>
        <dbReference type="SAM" id="MobiDB-lite"/>
    </source>
</evidence>
<evidence type="ECO:0000269" key="4">
    <source>
    </source>
</evidence>
<evidence type="ECO:0000305" key="5"/>
<sequence length="109" mass="12031">MLSVSRAATRMTGMVARFSAGGHGDGAGRGGGSGGSIRDAGGAFGKMEAAREDEYFYKKQKAQLQELREHIQEEVKHHEGQLENHKKVLERHQQRISEIEAQERALGKE</sequence>
<reference key="1">
    <citation type="journal article" date="1998" name="Science">
        <title>Genome sequence of the nematode C. elegans: a platform for investigating biology.</title>
        <authorList>
            <consortium name="The C. elegans sequencing consortium"/>
        </authorList>
    </citation>
    <scope>NUCLEOTIDE SEQUENCE [LARGE SCALE GENOMIC DNA]</scope>
    <source>
        <strain>Bristol N2</strain>
    </source>
</reference>
<reference key="2">
    <citation type="submission" date="2000-12" db="EMBL/GenBank/DDBJ databases">
        <title>The Caenorhabditis elegans transcriptome project, a complementary view of the genome.</title>
        <authorList>
            <person name="Kohara Y."/>
            <person name="Shin-i T."/>
            <person name="Suzuki Y."/>
            <person name="Sugano S."/>
            <person name="Potdevin M."/>
            <person name="Thierry-Mieg Y."/>
            <person name="Thierry-Mieg D."/>
            <person name="Thierry-Mieg J."/>
        </authorList>
    </citation>
    <scope>NUCLEOTIDE SEQUENCE [LARGE SCALE MRNA]</scope>
    <source>
        <strain>Bristol N2</strain>
    </source>
</reference>
<reference key="3">
    <citation type="journal article" date="2006" name="J. Bioenerg. Biomembr.">
        <title>Caenorhabditis elegans MAI-1 protein, which is similar to mitochondrial ATPase inhibitor (IF1), can inhibit yeast F0F1-ATPase but cannot be transported to yeast mitochondria.</title>
        <authorList>
            <person name="Ichikawa N."/>
            <person name="Ando C."/>
            <person name="Fumino M."/>
        </authorList>
    </citation>
    <scope>FUNCTION</scope>
</reference>
<accession>O44441</accession>
<protein>
    <recommendedName>
        <fullName evidence="5">ATPase inhibitor mai-2, mitochondrial</fullName>
    </recommendedName>
    <alternativeName>
        <fullName evidence="1">ATP synthase F1 subunit epsilon</fullName>
    </alternativeName>
</protein>
<gene>
    <name type="primary">mai-2</name>
    <name type="ORF">B0546.1</name>
</gene>
<name>ATIF2_CAEEL</name>
<comment type="function">
    <text evidence="4">Thought to be a regulatory component of the ATP-synthesizing complex in the mitochondria. Activity is pH dependent.</text>
</comment>
<comment type="subcellular location">
    <subcellularLocation>
        <location evidence="5">Mitochondrion</location>
    </subcellularLocation>
</comment>
<comment type="miscellaneous">
    <text>Mai-2 and tin-9.2 are transcribed on a dicistronic transcript where exos-4.1 is the upstream transcript and tin-9.2 the downstream.</text>
</comment>
<comment type="similarity">
    <text evidence="5">Belongs to the ATPase inhibitor family.</text>
</comment>